<keyword id="KW-0067">ATP-binding</keyword>
<keyword id="KW-0319">Glycerol metabolism</keyword>
<keyword id="KW-0418">Kinase</keyword>
<keyword id="KW-0547">Nucleotide-binding</keyword>
<keyword id="KW-1185">Reference proteome</keyword>
<keyword id="KW-0808">Transferase</keyword>
<organism>
    <name type="scientific">Shewanella oneidensis (strain ATCC 700550 / JCM 31522 / CIP 106686 / LMG 19005 / NCIMB 14063 / MR-1)</name>
    <dbReference type="NCBI Taxonomy" id="211586"/>
    <lineage>
        <taxon>Bacteria</taxon>
        <taxon>Pseudomonadati</taxon>
        <taxon>Pseudomonadota</taxon>
        <taxon>Gammaproteobacteria</taxon>
        <taxon>Alteromonadales</taxon>
        <taxon>Shewanellaceae</taxon>
        <taxon>Shewanella</taxon>
    </lineage>
</organism>
<comment type="function">
    <text evidence="1">Key enzyme in the regulation of glycerol uptake and metabolism. Catalyzes the phosphorylation of glycerol to yield sn-glycerol 3-phosphate.</text>
</comment>
<comment type="catalytic activity">
    <reaction evidence="1">
        <text>glycerol + ATP = sn-glycerol 3-phosphate + ADP + H(+)</text>
        <dbReference type="Rhea" id="RHEA:21644"/>
        <dbReference type="ChEBI" id="CHEBI:15378"/>
        <dbReference type="ChEBI" id="CHEBI:17754"/>
        <dbReference type="ChEBI" id="CHEBI:30616"/>
        <dbReference type="ChEBI" id="CHEBI:57597"/>
        <dbReference type="ChEBI" id="CHEBI:456216"/>
        <dbReference type="EC" id="2.7.1.30"/>
    </reaction>
</comment>
<comment type="activity regulation">
    <text evidence="1">Inhibited by fructose 1,6-bisphosphate (FBP).</text>
</comment>
<comment type="pathway">
    <text evidence="1">Polyol metabolism; glycerol degradation via glycerol kinase pathway; sn-glycerol 3-phosphate from glycerol: step 1/1.</text>
</comment>
<comment type="similarity">
    <text evidence="1">Belongs to the FGGY kinase family.</text>
</comment>
<accession>Q8E9N7</accession>
<proteinExistence type="inferred from homology"/>
<name>GLPK_SHEON</name>
<protein>
    <recommendedName>
        <fullName evidence="1">Glycerol kinase</fullName>
        <ecNumber evidence="1">2.7.1.30</ecNumber>
    </recommendedName>
    <alternativeName>
        <fullName evidence="1">ATP:glycerol 3-phosphotransferase</fullName>
    </alternativeName>
    <alternativeName>
        <fullName evidence="1">Glycerokinase</fullName>
        <shortName evidence="1">GK</shortName>
    </alternativeName>
</protein>
<reference key="1">
    <citation type="journal article" date="2002" name="Nat. Biotechnol.">
        <title>Genome sequence of the dissimilatory metal ion-reducing bacterium Shewanella oneidensis.</title>
        <authorList>
            <person name="Heidelberg J.F."/>
            <person name="Paulsen I.T."/>
            <person name="Nelson K.E."/>
            <person name="Gaidos E.J."/>
            <person name="Nelson W.C."/>
            <person name="Read T.D."/>
            <person name="Eisen J.A."/>
            <person name="Seshadri R."/>
            <person name="Ward N.L."/>
            <person name="Methe B.A."/>
            <person name="Clayton R.A."/>
            <person name="Meyer T."/>
            <person name="Tsapin A."/>
            <person name="Scott J."/>
            <person name="Beanan M.J."/>
            <person name="Brinkac L.M."/>
            <person name="Daugherty S.C."/>
            <person name="DeBoy R.T."/>
            <person name="Dodson R.J."/>
            <person name="Durkin A.S."/>
            <person name="Haft D.H."/>
            <person name="Kolonay J.F."/>
            <person name="Madupu R."/>
            <person name="Peterson J.D."/>
            <person name="Umayam L.A."/>
            <person name="White O."/>
            <person name="Wolf A.M."/>
            <person name="Vamathevan J.J."/>
            <person name="Weidman J.F."/>
            <person name="Impraim M."/>
            <person name="Lee K."/>
            <person name="Berry K.J."/>
            <person name="Lee C."/>
            <person name="Mueller J."/>
            <person name="Khouri H.M."/>
            <person name="Gill J."/>
            <person name="Utterback T.R."/>
            <person name="McDonald L.A."/>
            <person name="Feldblyum T.V."/>
            <person name="Smith H.O."/>
            <person name="Venter J.C."/>
            <person name="Nealson K.H."/>
            <person name="Fraser C.M."/>
        </authorList>
    </citation>
    <scope>NUCLEOTIDE SEQUENCE [LARGE SCALE GENOMIC DNA]</scope>
    <source>
        <strain>ATCC 700550 / JCM 31522 / CIP 106686 / LMG 19005 / NCIMB 14063 / MR-1</strain>
    </source>
</reference>
<sequence length="494" mass="53796">MQKKYVVALDQGTTSSRAIVFDHDANIVSVSQREFTQLYPNPGWVEHDPMEIWASQSSVLIESLARAGIHSDAVAAIGITNQRETTIIWEKATGKPVYNAIVWQCRRSAEICEQLKAQGLEDYVRQNTGLLLDPYFSGTKIKWILDNVPDARAKAKRGELLFGTVDTWLLWKLTEGKVHVTDPTNAARTLLFNIHSLSWDSKLLEALDIPAAMLPEVKPSCSVYGTTRIAGEGSEIPLAGIAGDQQAALFGQLCVEQGMAKNTYGTGCFLLMNTGSKAVRSSHGLLTTVAVGAQGEVNYALEGSVFMGGATIQWLRDELGLIRDASDTEYFASKVADTNGVYLVPAFVGLGAPYWDPNARGALFGLTRGANRNHIIRAALESIAYQSKDLLDAMIKDSGVSLKRLKVDGGAVANDFLMQFQADITDVEVLRPSVCETTALGAAFLAGLAVGFWNSVTELEHKACIDTHFKPSINADYRQQLYAGWQDAVARTRS</sequence>
<evidence type="ECO:0000255" key="1">
    <source>
        <dbReference type="HAMAP-Rule" id="MF_00186"/>
    </source>
</evidence>
<dbReference type="EC" id="2.7.1.30" evidence="1"/>
<dbReference type="EMBL" id="AE014299">
    <property type="protein sequence ID" value="AAN57202.1"/>
    <property type="molecule type" value="Genomic_DNA"/>
</dbReference>
<dbReference type="RefSeq" id="NP_719758.1">
    <property type="nucleotide sequence ID" value="NC_004347.2"/>
</dbReference>
<dbReference type="RefSeq" id="WP_011073911.1">
    <property type="nucleotide sequence ID" value="NC_004347.2"/>
</dbReference>
<dbReference type="SMR" id="Q8E9N7"/>
<dbReference type="STRING" id="211586.SO_4230"/>
<dbReference type="PaxDb" id="211586-SO_4230"/>
<dbReference type="KEGG" id="son:SO_4230"/>
<dbReference type="PATRIC" id="fig|211586.12.peg.4088"/>
<dbReference type="eggNOG" id="COG0554">
    <property type="taxonomic scope" value="Bacteria"/>
</dbReference>
<dbReference type="HOGENOM" id="CLU_009281_2_3_6"/>
<dbReference type="OrthoDB" id="9805576at2"/>
<dbReference type="PhylomeDB" id="Q8E9N7"/>
<dbReference type="BioCyc" id="SONE211586:G1GMP-3907-MONOMER"/>
<dbReference type="UniPathway" id="UPA00618">
    <property type="reaction ID" value="UER00672"/>
</dbReference>
<dbReference type="Proteomes" id="UP000008186">
    <property type="component" value="Chromosome"/>
</dbReference>
<dbReference type="GO" id="GO:0005829">
    <property type="term" value="C:cytosol"/>
    <property type="evidence" value="ECO:0000318"/>
    <property type="project" value="GO_Central"/>
</dbReference>
<dbReference type="GO" id="GO:0005524">
    <property type="term" value="F:ATP binding"/>
    <property type="evidence" value="ECO:0007669"/>
    <property type="project" value="UniProtKB-UniRule"/>
</dbReference>
<dbReference type="GO" id="GO:0004370">
    <property type="term" value="F:glycerol kinase activity"/>
    <property type="evidence" value="ECO:0000250"/>
    <property type="project" value="UniProtKB"/>
</dbReference>
<dbReference type="GO" id="GO:0019563">
    <property type="term" value="P:glycerol catabolic process"/>
    <property type="evidence" value="ECO:0000318"/>
    <property type="project" value="GO_Central"/>
</dbReference>
<dbReference type="GO" id="GO:0006071">
    <property type="term" value="P:glycerol metabolic process"/>
    <property type="evidence" value="ECO:0000250"/>
    <property type="project" value="UniProtKB"/>
</dbReference>
<dbReference type="GO" id="GO:0006072">
    <property type="term" value="P:glycerol-3-phosphate metabolic process"/>
    <property type="evidence" value="ECO:0007669"/>
    <property type="project" value="InterPro"/>
</dbReference>
<dbReference type="CDD" id="cd07786">
    <property type="entry name" value="FGGY_EcGK_like"/>
    <property type="match status" value="1"/>
</dbReference>
<dbReference type="FunFam" id="3.30.420.40:FF:000007">
    <property type="entry name" value="Glycerol kinase"/>
    <property type="match status" value="1"/>
</dbReference>
<dbReference type="FunFam" id="3.30.420.40:FF:000008">
    <property type="entry name" value="Glycerol kinase"/>
    <property type="match status" value="1"/>
</dbReference>
<dbReference type="Gene3D" id="3.30.420.40">
    <property type="match status" value="2"/>
</dbReference>
<dbReference type="HAMAP" id="MF_00186">
    <property type="entry name" value="Glycerol_kin"/>
    <property type="match status" value="1"/>
</dbReference>
<dbReference type="InterPro" id="IPR043129">
    <property type="entry name" value="ATPase_NBD"/>
</dbReference>
<dbReference type="InterPro" id="IPR000577">
    <property type="entry name" value="Carb_kinase_FGGY"/>
</dbReference>
<dbReference type="InterPro" id="IPR018483">
    <property type="entry name" value="Carb_kinase_FGGY_CS"/>
</dbReference>
<dbReference type="InterPro" id="IPR018485">
    <property type="entry name" value="FGGY_C"/>
</dbReference>
<dbReference type="InterPro" id="IPR018484">
    <property type="entry name" value="FGGY_N"/>
</dbReference>
<dbReference type="InterPro" id="IPR005999">
    <property type="entry name" value="Glycerol_kin"/>
</dbReference>
<dbReference type="NCBIfam" id="TIGR01311">
    <property type="entry name" value="glycerol_kin"/>
    <property type="match status" value="1"/>
</dbReference>
<dbReference type="NCBIfam" id="NF000756">
    <property type="entry name" value="PRK00047.1"/>
    <property type="match status" value="1"/>
</dbReference>
<dbReference type="PANTHER" id="PTHR10196:SF69">
    <property type="entry name" value="GLYCEROL KINASE"/>
    <property type="match status" value="1"/>
</dbReference>
<dbReference type="PANTHER" id="PTHR10196">
    <property type="entry name" value="SUGAR KINASE"/>
    <property type="match status" value="1"/>
</dbReference>
<dbReference type="Pfam" id="PF02782">
    <property type="entry name" value="FGGY_C"/>
    <property type="match status" value="1"/>
</dbReference>
<dbReference type="Pfam" id="PF00370">
    <property type="entry name" value="FGGY_N"/>
    <property type="match status" value="1"/>
</dbReference>
<dbReference type="PIRSF" id="PIRSF000538">
    <property type="entry name" value="GlpK"/>
    <property type="match status" value="1"/>
</dbReference>
<dbReference type="SUPFAM" id="SSF53067">
    <property type="entry name" value="Actin-like ATPase domain"/>
    <property type="match status" value="2"/>
</dbReference>
<dbReference type="PROSITE" id="PS00933">
    <property type="entry name" value="FGGY_KINASES_1"/>
    <property type="match status" value="1"/>
</dbReference>
<dbReference type="PROSITE" id="PS00445">
    <property type="entry name" value="FGGY_KINASES_2"/>
    <property type="match status" value="1"/>
</dbReference>
<feature type="chain" id="PRO_0000059487" description="Glycerol kinase">
    <location>
        <begin position="1"/>
        <end position="494"/>
    </location>
</feature>
<feature type="binding site" evidence="1">
    <location>
        <position position="13"/>
    </location>
    <ligand>
        <name>ADP</name>
        <dbReference type="ChEBI" id="CHEBI:456216"/>
    </ligand>
</feature>
<feature type="binding site" evidence="1">
    <location>
        <position position="13"/>
    </location>
    <ligand>
        <name>ATP</name>
        <dbReference type="ChEBI" id="CHEBI:30616"/>
    </ligand>
</feature>
<feature type="binding site" evidence="1">
    <location>
        <position position="13"/>
    </location>
    <ligand>
        <name>sn-glycerol 3-phosphate</name>
        <dbReference type="ChEBI" id="CHEBI:57597"/>
    </ligand>
</feature>
<feature type="binding site" evidence="1">
    <location>
        <position position="14"/>
    </location>
    <ligand>
        <name>ATP</name>
        <dbReference type="ChEBI" id="CHEBI:30616"/>
    </ligand>
</feature>
<feature type="binding site" evidence="1">
    <location>
        <position position="15"/>
    </location>
    <ligand>
        <name>ATP</name>
        <dbReference type="ChEBI" id="CHEBI:30616"/>
    </ligand>
</feature>
<feature type="binding site" evidence="1">
    <location>
        <position position="17"/>
    </location>
    <ligand>
        <name>ADP</name>
        <dbReference type="ChEBI" id="CHEBI:456216"/>
    </ligand>
</feature>
<feature type="binding site" evidence="1">
    <location>
        <position position="83"/>
    </location>
    <ligand>
        <name>glycerol</name>
        <dbReference type="ChEBI" id="CHEBI:17754"/>
    </ligand>
</feature>
<feature type="binding site" evidence="1">
    <location>
        <position position="83"/>
    </location>
    <ligand>
        <name>sn-glycerol 3-phosphate</name>
        <dbReference type="ChEBI" id="CHEBI:57597"/>
    </ligand>
</feature>
<feature type="binding site" evidence="1">
    <location>
        <position position="84"/>
    </location>
    <ligand>
        <name>glycerol</name>
        <dbReference type="ChEBI" id="CHEBI:17754"/>
    </ligand>
</feature>
<feature type="binding site" evidence="1">
    <location>
        <position position="84"/>
    </location>
    <ligand>
        <name>sn-glycerol 3-phosphate</name>
        <dbReference type="ChEBI" id="CHEBI:57597"/>
    </ligand>
</feature>
<feature type="binding site" evidence="1">
    <location>
        <position position="135"/>
    </location>
    <ligand>
        <name>glycerol</name>
        <dbReference type="ChEBI" id="CHEBI:17754"/>
    </ligand>
</feature>
<feature type="binding site" evidence="1">
    <location>
        <position position="135"/>
    </location>
    <ligand>
        <name>sn-glycerol 3-phosphate</name>
        <dbReference type="ChEBI" id="CHEBI:57597"/>
    </ligand>
</feature>
<feature type="binding site" evidence="1">
    <location>
        <position position="244"/>
    </location>
    <ligand>
        <name>glycerol</name>
        <dbReference type="ChEBI" id="CHEBI:17754"/>
    </ligand>
</feature>
<feature type="binding site" evidence="1">
    <location>
        <position position="244"/>
    </location>
    <ligand>
        <name>sn-glycerol 3-phosphate</name>
        <dbReference type="ChEBI" id="CHEBI:57597"/>
    </ligand>
</feature>
<feature type="binding site" evidence="1">
    <location>
        <position position="245"/>
    </location>
    <ligand>
        <name>glycerol</name>
        <dbReference type="ChEBI" id="CHEBI:17754"/>
    </ligand>
</feature>
<feature type="binding site" evidence="1">
    <location>
        <position position="266"/>
    </location>
    <ligand>
        <name>ADP</name>
        <dbReference type="ChEBI" id="CHEBI:456216"/>
    </ligand>
</feature>
<feature type="binding site" evidence="1">
    <location>
        <position position="266"/>
    </location>
    <ligand>
        <name>ATP</name>
        <dbReference type="ChEBI" id="CHEBI:30616"/>
    </ligand>
</feature>
<feature type="binding site" evidence="1">
    <location>
        <position position="309"/>
    </location>
    <ligand>
        <name>ADP</name>
        <dbReference type="ChEBI" id="CHEBI:456216"/>
    </ligand>
</feature>
<feature type="binding site" evidence="1">
    <location>
        <position position="309"/>
    </location>
    <ligand>
        <name>ATP</name>
        <dbReference type="ChEBI" id="CHEBI:30616"/>
    </ligand>
</feature>
<feature type="binding site" evidence="1">
    <location>
        <position position="313"/>
    </location>
    <ligand>
        <name>ATP</name>
        <dbReference type="ChEBI" id="CHEBI:30616"/>
    </ligand>
</feature>
<feature type="binding site" evidence="1">
    <location>
        <position position="410"/>
    </location>
    <ligand>
        <name>ADP</name>
        <dbReference type="ChEBI" id="CHEBI:456216"/>
    </ligand>
</feature>
<feature type="binding site" evidence="1">
    <location>
        <position position="410"/>
    </location>
    <ligand>
        <name>ATP</name>
        <dbReference type="ChEBI" id="CHEBI:30616"/>
    </ligand>
</feature>
<feature type="binding site" evidence="1">
    <location>
        <position position="414"/>
    </location>
    <ligand>
        <name>ADP</name>
        <dbReference type="ChEBI" id="CHEBI:456216"/>
    </ligand>
</feature>
<gene>
    <name evidence="1" type="primary">glpK</name>
    <name type="ordered locus">SO_4230</name>
</gene>